<evidence type="ECO:0000250" key="1">
    <source>
        <dbReference type="UniProtKB" id="P93836"/>
    </source>
</evidence>
<evidence type="ECO:0000255" key="2">
    <source>
        <dbReference type="PROSITE-ProRule" id="PRU01163"/>
    </source>
</evidence>
<evidence type="ECO:0000269" key="3">
    <source>
    </source>
</evidence>
<evidence type="ECO:0000269" key="4">
    <source>
    </source>
</evidence>
<evidence type="ECO:0000269" key="5">
    <source>
    </source>
</evidence>
<evidence type="ECO:0000303" key="6">
    <source>
    </source>
</evidence>
<evidence type="ECO:0000303" key="7">
    <source>
    </source>
</evidence>
<evidence type="ECO:0000305" key="8"/>
<evidence type="ECO:0000305" key="9">
    <source>
    </source>
</evidence>
<reference key="1">
    <citation type="journal article" date="2005" name="Nature">
        <title>Genomic sequence of the pathogenic and allergenic filamentous fungus Aspergillus fumigatus.</title>
        <authorList>
            <person name="Nierman W.C."/>
            <person name="Pain A."/>
            <person name="Anderson M.J."/>
            <person name="Wortman J.R."/>
            <person name="Kim H.S."/>
            <person name="Arroyo J."/>
            <person name="Berriman M."/>
            <person name="Abe K."/>
            <person name="Archer D.B."/>
            <person name="Bermejo C."/>
            <person name="Bennett J.W."/>
            <person name="Bowyer P."/>
            <person name="Chen D."/>
            <person name="Collins M."/>
            <person name="Coulsen R."/>
            <person name="Davies R."/>
            <person name="Dyer P.S."/>
            <person name="Farman M.L."/>
            <person name="Fedorova N."/>
            <person name="Fedorova N.D."/>
            <person name="Feldblyum T.V."/>
            <person name="Fischer R."/>
            <person name="Fosker N."/>
            <person name="Fraser A."/>
            <person name="Garcia J.L."/>
            <person name="Garcia M.J."/>
            <person name="Goble A."/>
            <person name="Goldman G.H."/>
            <person name="Gomi K."/>
            <person name="Griffith-Jones S."/>
            <person name="Gwilliam R."/>
            <person name="Haas B.J."/>
            <person name="Haas H."/>
            <person name="Harris D.E."/>
            <person name="Horiuchi H."/>
            <person name="Huang J."/>
            <person name="Humphray S."/>
            <person name="Jimenez J."/>
            <person name="Keller N."/>
            <person name="Khouri H."/>
            <person name="Kitamoto K."/>
            <person name="Kobayashi T."/>
            <person name="Konzack S."/>
            <person name="Kulkarni R."/>
            <person name="Kumagai T."/>
            <person name="Lafton A."/>
            <person name="Latge J.-P."/>
            <person name="Li W."/>
            <person name="Lord A."/>
            <person name="Lu C."/>
            <person name="Majoros W.H."/>
            <person name="May G.S."/>
            <person name="Miller B.L."/>
            <person name="Mohamoud Y."/>
            <person name="Molina M."/>
            <person name="Monod M."/>
            <person name="Mouyna I."/>
            <person name="Mulligan S."/>
            <person name="Murphy L.D."/>
            <person name="O'Neil S."/>
            <person name="Paulsen I."/>
            <person name="Penalva M.A."/>
            <person name="Pertea M."/>
            <person name="Price C."/>
            <person name="Pritchard B.L."/>
            <person name="Quail M.A."/>
            <person name="Rabbinowitsch E."/>
            <person name="Rawlins N."/>
            <person name="Rajandream M.A."/>
            <person name="Reichard U."/>
            <person name="Renauld H."/>
            <person name="Robson G.D."/>
            <person name="Rodriguez de Cordoba S."/>
            <person name="Rodriguez-Pena J.M."/>
            <person name="Ronning C.M."/>
            <person name="Rutter S."/>
            <person name="Salzberg S.L."/>
            <person name="Sanchez M."/>
            <person name="Sanchez-Ferrero J.C."/>
            <person name="Saunders D."/>
            <person name="Seeger K."/>
            <person name="Squares R."/>
            <person name="Squares S."/>
            <person name="Takeuchi M."/>
            <person name="Tekaia F."/>
            <person name="Turner G."/>
            <person name="Vazquez de Aldana C.R."/>
            <person name="Weidman J."/>
            <person name="White O."/>
            <person name="Woodward J.R."/>
            <person name="Yu J.-H."/>
            <person name="Fraser C.M."/>
            <person name="Galagan J.E."/>
            <person name="Asai K."/>
            <person name="Machida M."/>
            <person name="Hall N."/>
            <person name="Barrell B.G."/>
            <person name="Denning D.W."/>
        </authorList>
    </citation>
    <scope>NUCLEOTIDE SEQUENCE [LARGE SCALE GENOMIC DNA]</scope>
    <source>
        <strain>ATCC MYA-4609 / CBS 101355 / FGSC A1100 / Af293</strain>
    </source>
</reference>
<reference key="2">
    <citation type="journal article" date="2009" name="Appl. Environ. Microbiol.">
        <title>Production of pyomelanin, a second type of melanin, via the tyrosine degradation pathway in Aspergillus fumigatus.</title>
        <authorList>
            <person name="Schmaler-Ripcke J."/>
            <person name="Sugareva V."/>
            <person name="Gebhardt P."/>
            <person name="Winkler R."/>
            <person name="Kniemeyer O."/>
            <person name="Heinekamp T."/>
            <person name="Brakhage A.A."/>
        </authorList>
    </citation>
    <scope>FUNCTION</scope>
    <scope>DISRUPTION PHENOTYPE</scope>
    <scope>INDUCTION</scope>
    <scope>PATHWAY</scope>
</reference>
<reference key="3">
    <citation type="journal article" date="2009" name="Fungal Genet. Biol.">
        <title>The MpkA MAP kinase module regulates cell wall integrity signaling and pyomelanin formation in Aspergillus fumigatus.</title>
        <authorList>
            <person name="Valiante V."/>
            <person name="Jain R."/>
            <person name="Heinekamp T."/>
            <person name="Brakhage A.A."/>
        </authorList>
    </citation>
    <scope>FUNCTION</scope>
    <scope>DISRUPTION PHENOTYPE</scope>
</reference>
<reference key="4">
    <citation type="journal article" date="2011" name="PLoS ONE">
        <title>Pyomelanin formation in Aspergillus fumigatus requires HmgX and the transcriptional activator HmgR but is dispensable for virulence.</title>
        <authorList>
            <person name="Keller S."/>
            <person name="Macheleidt J."/>
            <person name="Scherlach K."/>
            <person name="Schmaler-Ripcke J."/>
            <person name="Jacobsen I.D."/>
            <person name="Heinekamp T."/>
            <person name="Brakhage A.A."/>
        </authorList>
    </citation>
    <scope>FUNCTION</scope>
    <scope>INDUCTION</scope>
    <scope>CATALYTIC ACTIVITY</scope>
    <scope>PATHWAY</scope>
</reference>
<keyword id="KW-0223">Dioxygenase</keyword>
<keyword id="KW-0408">Iron</keyword>
<keyword id="KW-0479">Metal-binding</keyword>
<keyword id="KW-0560">Oxidoreductase</keyword>
<keyword id="KW-0585">Phenylalanine catabolism</keyword>
<keyword id="KW-1185">Reference proteome</keyword>
<keyword id="KW-0677">Repeat</keyword>
<keyword id="KW-0828">Tyrosine catabolism</keyword>
<feature type="chain" id="PRO_0000088401" description="4-hydroxyphenylpyruvate dioxygenase">
    <location>
        <begin position="1"/>
        <end position="403"/>
    </location>
</feature>
<feature type="domain" description="VOC 1" evidence="2">
    <location>
        <begin position="25"/>
        <end position="169"/>
    </location>
</feature>
<feature type="domain" description="VOC 2" evidence="2">
    <location>
        <begin position="201"/>
        <end position="359"/>
    </location>
</feature>
<feature type="binding site" evidence="1">
    <location>
        <position position="204"/>
    </location>
    <ligand>
        <name>Fe cation</name>
        <dbReference type="ChEBI" id="CHEBI:24875"/>
    </ligand>
</feature>
<feature type="binding site" evidence="1">
    <location>
        <position position="287"/>
    </location>
    <ligand>
        <name>Fe cation</name>
        <dbReference type="ChEBI" id="CHEBI:24875"/>
    </ligand>
</feature>
<feature type="binding site" evidence="1">
    <location>
        <position position="370"/>
    </location>
    <ligand>
        <name>Fe cation</name>
        <dbReference type="ChEBI" id="CHEBI:24875"/>
    </ligand>
</feature>
<gene>
    <name evidence="6" type="primary">hppD</name>
    <name type="ORF">AFUA_2G04200</name>
</gene>
<comment type="function">
    <text evidence="3 4 5 9">4-hydroxyphenylpyruvate dioxygenase; part of the L-tyrosine degradation gene cluster that mediates the biosynthesis of the brownish pigment pyomelanin as an alternative melanin (PubMed:19028908, PubMed:22046314). The 4-hydroxyphenylpyruvate dioxygenase hppD catalyzes the conversion of 4-hydroxyphenylpyruvate to homogentisic acid (HGA) (PubMed:19028908, PubMed:22046314). The protein hmgX is crucial for this conversion and thus, probably functions as an accessory factor to mediate specific activity of hppD (PubMed:22046314). The homogentisate 1,2-dioxygenase hmgA is then involved in the cleavage of the aromatic ring of HGA and its conversion to 4-maleylacetoacetate (PubMed:19028908, PubMed:19715768). When hmgA activity is lowered by the cell wall integrity (CWI) signaling pathway, HGA accumulates and leads to the production of pyomelanin through benzoquinone acetic acid after oxidation and polymerization (PubMed:19715768). On the opposite, in non-stress conditions, both hppD and hmgA activities are balanced and HGA is degraded into 4-maleylacetoacetate (PubMed:19715768). 4-maleylacetoacetate is further converted to 4-fumarylacetoacetate by the maleylacetoacetate isomerase maiA, which is degraded into fumarate and acetoacetate by the fumarylacetoacetase fahA (Probable).</text>
</comment>
<comment type="catalytic activity">
    <reaction evidence="5">
        <text>3-(4-hydroxyphenyl)pyruvate + O2 = homogentisate + CO2</text>
        <dbReference type="Rhea" id="RHEA:16189"/>
        <dbReference type="ChEBI" id="CHEBI:15379"/>
        <dbReference type="ChEBI" id="CHEBI:16169"/>
        <dbReference type="ChEBI" id="CHEBI:16526"/>
        <dbReference type="ChEBI" id="CHEBI:36242"/>
        <dbReference type="EC" id="1.13.11.27"/>
    </reaction>
    <physiologicalReaction direction="left-to-right" evidence="5">
        <dbReference type="Rhea" id="RHEA:16190"/>
    </physiologicalReaction>
</comment>
<comment type="cofactor">
    <cofactor evidence="1">
        <name>Fe cation</name>
        <dbReference type="ChEBI" id="CHEBI:24875"/>
    </cofactor>
    <text evidence="1">Binds 1 Fe cation per subunit.</text>
</comment>
<comment type="pathway">
    <text evidence="9">Amino-acid degradation; L-phenylalanine degradation; acetoacetate and fumarate from L-phenylalanine: step 3/6.</text>
</comment>
<comment type="subunit">
    <text evidence="1">Homodimer.</text>
</comment>
<comment type="induction">
    <text evidence="3 5">Expression is induced by L-tyrosine (PubMed:19028908). Expression is positively regulated by the cluster-specific transcription factor hmgR (PubMed:22046314).</text>
</comment>
<comment type="disruption phenotype">
    <text evidence="3 4">Impairs growth on L-tyrosine as the sole carbon source and affects homogentisic acid and pyomelanin formation (PubMed:19028908, PubMed:19715768). Leads to increased sensitivity to reactive oxygen intermediates (PubMed:19028908).</text>
</comment>
<comment type="similarity">
    <text evidence="8">Belongs to the 4HPPD family.</text>
</comment>
<sequence length="403" mass="45534">MAPSAISTSPPPTDRVSSSLASYKGYDHVHWYVGNAKQAASYYITRMGFKRIAYRGLETGCRSVCSHVVRNGDITFILTSPLRSLDQVDRFPPEEQELLKEIHAHLEKHGDGVKDVAFEVDSVDSVFYAATNNGAKIVSQPRTLEDDNGQVRVATIQTYGETTHTLVERGSYHGAFLPGYRMETGVEDPISQLLPGVHLNRIDHCVGNQDWDEMDKVCEYYEKALGFHRFWSVDDKQICTEYSALKSIVMASPNEVVKMPINEPAKGKKQSQIEEYVDFYNGAGVQHIALLTDDIIRDITNLKARGVEFIKVPDTYYEDIKVRLKKAGLTLHEDFETIRSLDILIDFDEGGYLLQLFTKHLMDRPTVFIEIIQRHNFSGFGAGNFKSLFEAIEREQALRGNLV</sequence>
<accession>Q4WHU1</accession>
<organism>
    <name type="scientific">Aspergillus fumigatus (strain ATCC MYA-4609 / CBS 101355 / FGSC A1100 / Af293)</name>
    <name type="common">Neosartorya fumigata</name>
    <dbReference type="NCBI Taxonomy" id="330879"/>
    <lineage>
        <taxon>Eukaryota</taxon>
        <taxon>Fungi</taxon>
        <taxon>Dikarya</taxon>
        <taxon>Ascomycota</taxon>
        <taxon>Pezizomycotina</taxon>
        <taxon>Eurotiomycetes</taxon>
        <taxon>Eurotiomycetidae</taxon>
        <taxon>Eurotiales</taxon>
        <taxon>Aspergillaceae</taxon>
        <taxon>Aspergillus</taxon>
        <taxon>Aspergillus subgen. Fumigati</taxon>
    </lineage>
</organism>
<name>HPPD1_ASPFU</name>
<proteinExistence type="evidence at protein level"/>
<dbReference type="EC" id="1.13.11.27" evidence="5"/>
<dbReference type="EMBL" id="AAHF01000008">
    <property type="protein sequence ID" value="EAL87514.1"/>
    <property type="molecule type" value="Genomic_DNA"/>
</dbReference>
<dbReference type="RefSeq" id="XP_749552.1">
    <property type="nucleotide sequence ID" value="XM_744459.1"/>
</dbReference>
<dbReference type="SMR" id="Q4WHU1"/>
<dbReference type="STRING" id="330879.Q4WHU1"/>
<dbReference type="EnsemblFungi" id="EAL87514">
    <property type="protein sequence ID" value="EAL87514"/>
    <property type="gene ID" value="AFUA_2G04200"/>
</dbReference>
<dbReference type="GeneID" id="3507145"/>
<dbReference type="KEGG" id="afm:AFUA_2G04200"/>
<dbReference type="VEuPathDB" id="FungiDB:Afu2g04200"/>
<dbReference type="eggNOG" id="KOG0638">
    <property type="taxonomic scope" value="Eukaryota"/>
</dbReference>
<dbReference type="HOGENOM" id="CLU_034004_3_1_1"/>
<dbReference type="InParanoid" id="Q4WHU1"/>
<dbReference type="OMA" id="DPFPVKG"/>
<dbReference type="OrthoDB" id="414569at2759"/>
<dbReference type="UniPathway" id="UPA00139">
    <property type="reaction ID" value="UER00362"/>
</dbReference>
<dbReference type="Proteomes" id="UP000002530">
    <property type="component" value="Chromosome 2"/>
</dbReference>
<dbReference type="GO" id="GO:0003868">
    <property type="term" value="F:4-hydroxyphenylpyruvate dioxygenase activity"/>
    <property type="evidence" value="ECO:0000318"/>
    <property type="project" value="GO_Central"/>
</dbReference>
<dbReference type="GO" id="GO:0046872">
    <property type="term" value="F:metal ion binding"/>
    <property type="evidence" value="ECO:0007669"/>
    <property type="project" value="UniProtKB-KW"/>
</dbReference>
<dbReference type="GO" id="GO:0006559">
    <property type="term" value="P:L-phenylalanine catabolic process"/>
    <property type="evidence" value="ECO:0007669"/>
    <property type="project" value="UniProtKB-UniPathway"/>
</dbReference>
<dbReference type="GO" id="GO:0042438">
    <property type="term" value="P:melanin biosynthetic process"/>
    <property type="evidence" value="ECO:0000315"/>
    <property type="project" value="AspGD"/>
</dbReference>
<dbReference type="GO" id="GO:0006572">
    <property type="term" value="P:tyrosine catabolic process"/>
    <property type="evidence" value="ECO:0000315"/>
    <property type="project" value="AspGD"/>
</dbReference>
<dbReference type="CDD" id="cd07250">
    <property type="entry name" value="HPPD_C_like"/>
    <property type="match status" value="1"/>
</dbReference>
<dbReference type="CDD" id="cd08342">
    <property type="entry name" value="HPPD_N_like"/>
    <property type="match status" value="1"/>
</dbReference>
<dbReference type="FunFam" id="3.10.180.10:FF:000001">
    <property type="entry name" value="4-hydroxyphenylpyruvate dioxygenase"/>
    <property type="match status" value="1"/>
</dbReference>
<dbReference type="FunFam" id="3.10.180.10:FF:000020">
    <property type="entry name" value="4-hydroxyphenylpyruvate dioxygenase"/>
    <property type="match status" value="1"/>
</dbReference>
<dbReference type="Gene3D" id="3.10.180.10">
    <property type="entry name" value="2,3-Dihydroxybiphenyl 1,2-Dioxygenase, domain 1"/>
    <property type="match status" value="2"/>
</dbReference>
<dbReference type="InterPro" id="IPR005956">
    <property type="entry name" value="4OHPhenylPyrv_dOase"/>
</dbReference>
<dbReference type="InterPro" id="IPR041735">
    <property type="entry name" value="4OHPhenylPyrv_dOase_C"/>
</dbReference>
<dbReference type="InterPro" id="IPR041736">
    <property type="entry name" value="4OHPhenylPyrv_dOase_N"/>
</dbReference>
<dbReference type="InterPro" id="IPR029068">
    <property type="entry name" value="Glyas_Bleomycin-R_OHBP_Dase"/>
</dbReference>
<dbReference type="InterPro" id="IPR004360">
    <property type="entry name" value="Glyas_Fos-R_dOase_dom"/>
</dbReference>
<dbReference type="InterPro" id="IPR037523">
    <property type="entry name" value="VOC"/>
</dbReference>
<dbReference type="NCBIfam" id="TIGR01263">
    <property type="entry name" value="4HPPD"/>
    <property type="match status" value="1"/>
</dbReference>
<dbReference type="PANTHER" id="PTHR11959">
    <property type="entry name" value="4-HYDROXYPHENYLPYRUVATE DIOXYGENASE"/>
    <property type="match status" value="1"/>
</dbReference>
<dbReference type="PANTHER" id="PTHR11959:SF1">
    <property type="entry name" value="4-HYDROXYPHENYLPYRUVATE DIOXYGENASE"/>
    <property type="match status" value="1"/>
</dbReference>
<dbReference type="Pfam" id="PF00903">
    <property type="entry name" value="Glyoxalase"/>
    <property type="match status" value="1"/>
</dbReference>
<dbReference type="PIRSF" id="PIRSF009283">
    <property type="entry name" value="HPP_dOase"/>
    <property type="match status" value="1"/>
</dbReference>
<dbReference type="SUPFAM" id="SSF54593">
    <property type="entry name" value="Glyoxalase/Bleomycin resistance protein/Dihydroxybiphenyl dioxygenase"/>
    <property type="match status" value="1"/>
</dbReference>
<dbReference type="PROSITE" id="PS51819">
    <property type="entry name" value="VOC"/>
    <property type="match status" value="2"/>
</dbReference>
<protein>
    <recommendedName>
        <fullName evidence="6">4-hydroxyphenylpyruvate dioxygenase</fullName>
        <shortName evidence="8">4HPPD</shortName>
        <shortName evidence="8">HPD</shortName>
        <shortName evidence="8">HPPDase</shortName>
        <ecNumber evidence="5">1.13.11.27</ecNumber>
    </recommendedName>
    <alternativeName>
        <fullName evidence="7">L-tyrosine degradation gene cluster protein hppD</fullName>
    </alternativeName>
    <alternativeName>
        <fullName evidence="7">Pyomelanin biosynthesis cluster protein hppD</fullName>
    </alternativeName>
</protein>